<sequence length="224" mass="24159">MKVKTKSKKVNKAWLNDHINDPYVKLAQKEGYRARAAYKLKEIDEALGLIKPGQVVVDLGAAPGAWSQYLRRRFAPKEAGTGGAAAGALNGRIIALDLLDFEPIEGVQFIQGDFHDEAVLAELSAAIGGRGVDVVVSDMAPNLSGIASSDSARIALLVELAVEFAETHLHPHGALVCKVFHGSGHSQLVELFKKRFRVVKPIKPKASRDKSSETFLVGIGLKSR</sequence>
<protein>
    <recommendedName>
        <fullName evidence="1">Ribosomal RNA large subunit methyltransferase E</fullName>
        <ecNumber evidence="1">2.1.1.166</ecNumber>
    </recommendedName>
    <alternativeName>
        <fullName evidence="1">23S rRNA Um2552 methyltransferase</fullName>
    </alternativeName>
    <alternativeName>
        <fullName evidence="1">rRNA (uridine-2'-O-)-methyltransferase</fullName>
    </alternativeName>
</protein>
<proteinExistence type="inferred from homology"/>
<organism>
    <name type="scientific">Methylibium petroleiphilum (strain ATCC BAA-1232 / LMG 22953 / PM1)</name>
    <dbReference type="NCBI Taxonomy" id="420662"/>
    <lineage>
        <taxon>Bacteria</taxon>
        <taxon>Pseudomonadati</taxon>
        <taxon>Pseudomonadota</taxon>
        <taxon>Betaproteobacteria</taxon>
        <taxon>Burkholderiales</taxon>
        <taxon>Sphaerotilaceae</taxon>
        <taxon>Methylibium</taxon>
    </lineage>
</organism>
<accession>A2SF90</accession>
<keyword id="KW-0963">Cytoplasm</keyword>
<keyword id="KW-0489">Methyltransferase</keyword>
<keyword id="KW-1185">Reference proteome</keyword>
<keyword id="KW-0698">rRNA processing</keyword>
<keyword id="KW-0949">S-adenosyl-L-methionine</keyword>
<keyword id="KW-0808">Transferase</keyword>
<name>RLME_METPP</name>
<comment type="function">
    <text evidence="1">Specifically methylates the uridine in position 2552 of 23S rRNA at the 2'-O position of the ribose in the fully assembled 50S ribosomal subunit.</text>
</comment>
<comment type="catalytic activity">
    <reaction evidence="1">
        <text>uridine(2552) in 23S rRNA + S-adenosyl-L-methionine = 2'-O-methyluridine(2552) in 23S rRNA + S-adenosyl-L-homocysteine + H(+)</text>
        <dbReference type="Rhea" id="RHEA:42720"/>
        <dbReference type="Rhea" id="RHEA-COMP:10202"/>
        <dbReference type="Rhea" id="RHEA-COMP:10203"/>
        <dbReference type="ChEBI" id="CHEBI:15378"/>
        <dbReference type="ChEBI" id="CHEBI:57856"/>
        <dbReference type="ChEBI" id="CHEBI:59789"/>
        <dbReference type="ChEBI" id="CHEBI:65315"/>
        <dbReference type="ChEBI" id="CHEBI:74478"/>
        <dbReference type="EC" id="2.1.1.166"/>
    </reaction>
</comment>
<comment type="subcellular location">
    <subcellularLocation>
        <location evidence="1">Cytoplasm</location>
    </subcellularLocation>
</comment>
<comment type="similarity">
    <text evidence="1">Belongs to the class I-like SAM-binding methyltransferase superfamily. RNA methyltransferase RlmE family.</text>
</comment>
<gene>
    <name evidence="1" type="primary">rlmE</name>
    <name evidence="1" type="synonym">ftsJ</name>
    <name evidence="1" type="synonym">rrmJ</name>
    <name type="ordered locus">Mpe_A1267</name>
</gene>
<feature type="chain" id="PRO_0000300595" description="Ribosomal RNA large subunit methyltransferase E">
    <location>
        <begin position="1"/>
        <end position="224"/>
    </location>
</feature>
<feature type="active site" description="Proton acceptor" evidence="1">
    <location>
        <position position="178"/>
    </location>
</feature>
<feature type="binding site" evidence="1">
    <location>
        <position position="64"/>
    </location>
    <ligand>
        <name>S-adenosyl-L-methionine</name>
        <dbReference type="ChEBI" id="CHEBI:59789"/>
    </ligand>
</feature>
<feature type="binding site" evidence="1">
    <location>
        <position position="66"/>
    </location>
    <ligand>
        <name>S-adenosyl-L-methionine</name>
        <dbReference type="ChEBI" id="CHEBI:59789"/>
    </ligand>
</feature>
<feature type="binding site" evidence="1">
    <location>
        <position position="97"/>
    </location>
    <ligand>
        <name>S-adenosyl-L-methionine</name>
        <dbReference type="ChEBI" id="CHEBI:59789"/>
    </ligand>
</feature>
<feature type="binding site" evidence="1">
    <location>
        <position position="113"/>
    </location>
    <ligand>
        <name>S-adenosyl-L-methionine</name>
        <dbReference type="ChEBI" id="CHEBI:59789"/>
    </ligand>
</feature>
<feature type="binding site" evidence="1">
    <location>
        <position position="138"/>
    </location>
    <ligand>
        <name>S-adenosyl-L-methionine</name>
        <dbReference type="ChEBI" id="CHEBI:59789"/>
    </ligand>
</feature>
<reference key="1">
    <citation type="journal article" date="2007" name="J. Bacteriol.">
        <title>Whole-genome analysis of the methyl tert-butyl ether-degrading beta-proteobacterium Methylibium petroleiphilum PM1.</title>
        <authorList>
            <person name="Kane S.R."/>
            <person name="Chakicherla A.Y."/>
            <person name="Chain P.S.G."/>
            <person name="Schmidt R."/>
            <person name="Shin M.W."/>
            <person name="Legler T.C."/>
            <person name="Scow K.M."/>
            <person name="Larimer F.W."/>
            <person name="Lucas S.M."/>
            <person name="Richardson P.M."/>
            <person name="Hristova K.R."/>
        </authorList>
    </citation>
    <scope>NUCLEOTIDE SEQUENCE [LARGE SCALE GENOMIC DNA]</scope>
    <source>
        <strain>ATCC BAA-1232 / LMG 22953 / PM1</strain>
    </source>
</reference>
<evidence type="ECO:0000255" key="1">
    <source>
        <dbReference type="HAMAP-Rule" id="MF_01547"/>
    </source>
</evidence>
<dbReference type="EC" id="2.1.1.166" evidence="1"/>
<dbReference type="EMBL" id="CP000555">
    <property type="protein sequence ID" value="ABM94229.1"/>
    <property type="molecule type" value="Genomic_DNA"/>
</dbReference>
<dbReference type="RefSeq" id="WP_011828866.1">
    <property type="nucleotide sequence ID" value="NC_008825.1"/>
</dbReference>
<dbReference type="SMR" id="A2SF90"/>
<dbReference type="STRING" id="420662.Mpe_A1267"/>
<dbReference type="KEGG" id="mpt:Mpe_A1267"/>
<dbReference type="eggNOG" id="COG0293">
    <property type="taxonomic scope" value="Bacteria"/>
</dbReference>
<dbReference type="HOGENOM" id="CLU_009422_4_1_4"/>
<dbReference type="Proteomes" id="UP000000366">
    <property type="component" value="Chromosome"/>
</dbReference>
<dbReference type="GO" id="GO:0005737">
    <property type="term" value="C:cytoplasm"/>
    <property type="evidence" value="ECO:0007669"/>
    <property type="project" value="UniProtKB-SubCell"/>
</dbReference>
<dbReference type="GO" id="GO:0008650">
    <property type="term" value="F:rRNA (uridine-2'-O-)-methyltransferase activity"/>
    <property type="evidence" value="ECO:0007669"/>
    <property type="project" value="UniProtKB-UniRule"/>
</dbReference>
<dbReference type="FunFam" id="3.40.50.150:FF:000005">
    <property type="entry name" value="Ribosomal RNA large subunit methyltransferase E"/>
    <property type="match status" value="1"/>
</dbReference>
<dbReference type="Gene3D" id="3.40.50.150">
    <property type="entry name" value="Vaccinia Virus protein VP39"/>
    <property type="match status" value="1"/>
</dbReference>
<dbReference type="HAMAP" id="MF_01547">
    <property type="entry name" value="RNA_methyltr_E"/>
    <property type="match status" value="1"/>
</dbReference>
<dbReference type="InterPro" id="IPR050082">
    <property type="entry name" value="RNA_methyltr_RlmE"/>
</dbReference>
<dbReference type="InterPro" id="IPR002877">
    <property type="entry name" value="RNA_MeTrfase_FtsJ_dom"/>
</dbReference>
<dbReference type="InterPro" id="IPR015507">
    <property type="entry name" value="rRNA-MeTfrase_E"/>
</dbReference>
<dbReference type="InterPro" id="IPR029063">
    <property type="entry name" value="SAM-dependent_MTases_sf"/>
</dbReference>
<dbReference type="PANTHER" id="PTHR10920">
    <property type="entry name" value="RIBOSOMAL RNA METHYLTRANSFERASE"/>
    <property type="match status" value="1"/>
</dbReference>
<dbReference type="PANTHER" id="PTHR10920:SF18">
    <property type="entry name" value="RRNA METHYLTRANSFERASE 2, MITOCHONDRIAL"/>
    <property type="match status" value="1"/>
</dbReference>
<dbReference type="Pfam" id="PF01728">
    <property type="entry name" value="FtsJ"/>
    <property type="match status" value="1"/>
</dbReference>
<dbReference type="PIRSF" id="PIRSF005461">
    <property type="entry name" value="23S_rRNA_mtase"/>
    <property type="match status" value="1"/>
</dbReference>
<dbReference type="SUPFAM" id="SSF53335">
    <property type="entry name" value="S-adenosyl-L-methionine-dependent methyltransferases"/>
    <property type="match status" value="1"/>
</dbReference>